<accession>P0AC99</accession>
<accession>P28695</accession>
<accession>Q8KMY2</accession>
<dbReference type="EMBL" id="AE005174">
    <property type="protein sequence ID" value="AAG54310.1"/>
    <property type="molecule type" value="Genomic_DNA"/>
</dbReference>
<dbReference type="EMBL" id="BA000007">
    <property type="protein sequence ID" value="BAB33433.1"/>
    <property type="molecule type" value="Genomic_DNA"/>
</dbReference>
<dbReference type="PIR" id="B85481">
    <property type="entry name" value="B85481"/>
</dbReference>
<dbReference type="PIR" id="B90630">
    <property type="entry name" value="B90630"/>
</dbReference>
<dbReference type="RefSeq" id="NP_308037.1">
    <property type="nucleotide sequence ID" value="NC_002695.1"/>
</dbReference>
<dbReference type="RefSeq" id="WP_000528538.1">
    <property type="nucleotide sequence ID" value="NZ_VOAI01000002.1"/>
</dbReference>
<dbReference type="SMR" id="P0AC99"/>
<dbReference type="STRING" id="155864.Z0010"/>
<dbReference type="GeneID" id="913402"/>
<dbReference type="GeneID" id="93777432"/>
<dbReference type="KEGG" id="ece:Z0010"/>
<dbReference type="KEGG" id="ecs:ECs_0010"/>
<dbReference type="PATRIC" id="fig|386585.9.peg.107"/>
<dbReference type="eggNOG" id="COG1584">
    <property type="taxonomic scope" value="Bacteria"/>
</dbReference>
<dbReference type="HOGENOM" id="CLU_051062_3_0_6"/>
<dbReference type="OMA" id="WKKGNTF"/>
<dbReference type="Proteomes" id="UP000000558">
    <property type="component" value="Chromosome"/>
</dbReference>
<dbReference type="Proteomes" id="UP000002519">
    <property type="component" value="Chromosome"/>
</dbReference>
<dbReference type="GO" id="GO:0005886">
    <property type="term" value="C:plasma membrane"/>
    <property type="evidence" value="ECO:0007669"/>
    <property type="project" value="UniProtKB-SubCell"/>
</dbReference>
<dbReference type="GO" id="GO:0015360">
    <property type="term" value="F:acetate:proton symporter activity"/>
    <property type="evidence" value="ECO:0007669"/>
    <property type="project" value="TreeGrafter"/>
</dbReference>
<dbReference type="GO" id="GO:0071422">
    <property type="term" value="P:succinate transmembrane transport"/>
    <property type="evidence" value="ECO:0007669"/>
    <property type="project" value="TreeGrafter"/>
</dbReference>
<dbReference type="InterPro" id="IPR000791">
    <property type="entry name" value="Gpr1/Fun34/SatP-like"/>
</dbReference>
<dbReference type="InterPro" id="IPR047622">
    <property type="entry name" value="GPR1_FUN34_YAAH"/>
</dbReference>
<dbReference type="InterPro" id="IPR047623">
    <property type="entry name" value="SatP"/>
</dbReference>
<dbReference type="NCBIfam" id="NF038013">
    <property type="entry name" value="AceTr_1"/>
    <property type="match status" value="1"/>
</dbReference>
<dbReference type="NCBIfam" id="NF007941">
    <property type="entry name" value="PRK10659.1"/>
    <property type="match status" value="1"/>
</dbReference>
<dbReference type="PANTHER" id="PTHR30178">
    <property type="entry name" value="INNER MEMBRANE PROTEIN YAAH"/>
    <property type="match status" value="1"/>
</dbReference>
<dbReference type="PANTHER" id="PTHR30178:SF3">
    <property type="entry name" value="SUCCINATE-ACETATE_PROTON SYMPORTER SATP"/>
    <property type="match status" value="1"/>
</dbReference>
<dbReference type="Pfam" id="PF01184">
    <property type="entry name" value="Gpr1_Fun34_YaaH"/>
    <property type="match status" value="1"/>
</dbReference>
<dbReference type="PROSITE" id="PS01114">
    <property type="entry name" value="GPR1_FUN34_YAAH"/>
    <property type="match status" value="1"/>
</dbReference>
<proteinExistence type="inferred from homology"/>
<comment type="function">
    <text evidence="1">Uptake of acetate and succinate. Transport is energetically dependent on the protonmotive force (By similarity).</text>
</comment>
<comment type="subcellular location">
    <subcellularLocation>
        <location evidence="1">Cell inner membrane</location>
        <topology evidence="1">Multi-pass membrane protein</topology>
    </subcellularLocation>
</comment>
<comment type="similarity">
    <text evidence="3">Belongs to the acetate uptake transporter (AceTr) (TC 2.A.96) family.</text>
</comment>
<gene>
    <name type="primary">satP</name>
    <name type="synonym">yaaH</name>
    <name type="ordered locus">Z0010</name>
    <name type="ordered locus">ECs0010</name>
</gene>
<feature type="chain" id="PRO_0000135704" description="Succinate-acetate/proton symporter SatP">
    <location>
        <begin position="1"/>
        <end position="188"/>
    </location>
</feature>
<feature type="topological domain" description="Cytoplasmic" evidence="2">
    <location>
        <begin position="1"/>
        <end position="13"/>
    </location>
</feature>
<feature type="transmembrane region" description="Helical" evidence="2">
    <location>
        <begin position="14"/>
        <end position="34"/>
    </location>
</feature>
<feature type="topological domain" description="Periplasmic" evidence="2">
    <location>
        <position position="35"/>
    </location>
</feature>
<feature type="transmembrane region" description="Helical" evidence="2">
    <location>
        <begin position="36"/>
        <end position="56"/>
    </location>
</feature>
<feature type="topological domain" description="Cytoplasmic" evidence="2">
    <location>
        <begin position="57"/>
        <end position="63"/>
    </location>
</feature>
<feature type="transmembrane region" description="Helical" evidence="2">
    <location>
        <begin position="64"/>
        <end position="84"/>
    </location>
</feature>
<feature type="topological domain" description="Periplasmic" evidence="2">
    <location>
        <begin position="85"/>
        <end position="97"/>
    </location>
</feature>
<feature type="transmembrane region" description="Helical" evidence="2">
    <location>
        <begin position="98"/>
        <end position="118"/>
    </location>
</feature>
<feature type="topological domain" description="Cytoplasmic" evidence="2">
    <location>
        <begin position="119"/>
        <end position="122"/>
    </location>
</feature>
<feature type="transmembrane region" description="Helical" evidence="2">
    <location>
        <begin position="123"/>
        <end position="143"/>
    </location>
</feature>
<feature type="topological domain" description="Periplasmic" evidence="2">
    <location>
        <begin position="144"/>
        <end position="148"/>
    </location>
</feature>
<feature type="transmembrane region" description="Helical" evidence="2">
    <location>
        <begin position="149"/>
        <end position="169"/>
    </location>
</feature>
<feature type="topological domain" description="Cytoplasmic" evidence="2">
    <location>
        <begin position="170"/>
        <end position="188"/>
    </location>
</feature>
<keyword id="KW-0997">Cell inner membrane</keyword>
<keyword id="KW-1003">Cell membrane</keyword>
<keyword id="KW-0406">Ion transport</keyword>
<keyword id="KW-0472">Membrane</keyword>
<keyword id="KW-1185">Reference proteome</keyword>
<keyword id="KW-0769">Symport</keyword>
<keyword id="KW-0812">Transmembrane</keyword>
<keyword id="KW-1133">Transmembrane helix</keyword>
<keyword id="KW-0813">Transport</keyword>
<name>SATP_ECO57</name>
<reference key="1">
    <citation type="journal article" date="2001" name="Nature">
        <title>Genome sequence of enterohaemorrhagic Escherichia coli O157:H7.</title>
        <authorList>
            <person name="Perna N.T."/>
            <person name="Plunkett G. III"/>
            <person name="Burland V."/>
            <person name="Mau B."/>
            <person name="Glasner J.D."/>
            <person name="Rose D.J."/>
            <person name="Mayhew G.F."/>
            <person name="Evans P.S."/>
            <person name="Gregor J."/>
            <person name="Kirkpatrick H.A."/>
            <person name="Posfai G."/>
            <person name="Hackett J."/>
            <person name="Klink S."/>
            <person name="Boutin A."/>
            <person name="Shao Y."/>
            <person name="Miller L."/>
            <person name="Grotbeck E.J."/>
            <person name="Davis N.W."/>
            <person name="Lim A."/>
            <person name="Dimalanta E.T."/>
            <person name="Potamousis K."/>
            <person name="Apodaca J."/>
            <person name="Anantharaman T.S."/>
            <person name="Lin J."/>
            <person name="Yen G."/>
            <person name="Schwartz D.C."/>
            <person name="Welch R.A."/>
            <person name="Blattner F.R."/>
        </authorList>
    </citation>
    <scope>NUCLEOTIDE SEQUENCE [LARGE SCALE GENOMIC DNA]</scope>
    <source>
        <strain>O157:H7 / EDL933 / ATCC 700927 / EHEC</strain>
    </source>
</reference>
<reference key="2">
    <citation type="journal article" date="2001" name="DNA Res.">
        <title>Complete genome sequence of enterohemorrhagic Escherichia coli O157:H7 and genomic comparison with a laboratory strain K-12.</title>
        <authorList>
            <person name="Hayashi T."/>
            <person name="Makino K."/>
            <person name="Ohnishi M."/>
            <person name="Kurokawa K."/>
            <person name="Ishii K."/>
            <person name="Yokoyama K."/>
            <person name="Han C.-G."/>
            <person name="Ohtsubo E."/>
            <person name="Nakayama K."/>
            <person name="Murata T."/>
            <person name="Tanaka M."/>
            <person name="Tobe T."/>
            <person name="Iida T."/>
            <person name="Takami H."/>
            <person name="Honda T."/>
            <person name="Sasakawa C."/>
            <person name="Ogasawara N."/>
            <person name="Yasunaga T."/>
            <person name="Kuhara S."/>
            <person name="Shiba T."/>
            <person name="Hattori M."/>
            <person name="Shinagawa H."/>
        </authorList>
    </citation>
    <scope>NUCLEOTIDE SEQUENCE [LARGE SCALE GENOMIC DNA]</scope>
    <source>
        <strain>O157:H7 / Sakai / RIMD 0509952 / EHEC</strain>
    </source>
</reference>
<sequence>MGNTKLANPAPLGLMGFGMTTILLNLHNVGYFALDGIILAMGIFYGGIAQIFAGLLEYKKGNTFGLTAFTSYGSFWLTLVAILLMPKLGLTDAPNAQFLGVYLGLWGVFTLFMFFGTLKGARVLQFVFFSLTVLFALLAIGNIAGNAAIIHFAGWIGLICGASAIYLAMGEVLNEQFGRTVLPIGESH</sequence>
<evidence type="ECO:0000250" key="1"/>
<evidence type="ECO:0000255" key="2"/>
<evidence type="ECO:0000305" key="3"/>
<organism>
    <name type="scientific">Escherichia coli O157:H7</name>
    <dbReference type="NCBI Taxonomy" id="83334"/>
    <lineage>
        <taxon>Bacteria</taxon>
        <taxon>Pseudomonadati</taxon>
        <taxon>Pseudomonadota</taxon>
        <taxon>Gammaproteobacteria</taxon>
        <taxon>Enterobacterales</taxon>
        <taxon>Enterobacteriaceae</taxon>
        <taxon>Escherichia</taxon>
    </lineage>
</organism>
<protein>
    <recommendedName>
        <fullName>Succinate-acetate/proton symporter SatP</fullName>
    </recommendedName>
    <alternativeName>
        <fullName>Succinate-acetate transporter protein</fullName>
    </alternativeName>
</protein>